<comment type="function">
    <text evidence="1">Catalyzes the attachment of threonine to tRNA(Thr) in a two-step reaction: L-threonine is first activated by ATP to form Thr-AMP and then transferred to the acceptor end of tRNA(Thr). Also edits incorrectly charged L-seryl-tRNA(Thr).</text>
</comment>
<comment type="catalytic activity">
    <reaction evidence="1">
        <text>tRNA(Thr) + L-threonine + ATP = L-threonyl-tRNA(Thr) + AMP + diphosphate + H(+)</text>
        <dbReference type="Rhea" id="RHEA:24624"/>
        <dbReference type="Rhea" id="RHEA-COMP:9670"/>
        <dbReference type="Rhea" id="RHEA-COMP:9704"/>
        <dbReference type="ChEBI" id="CHEBI:15378"/>
        <dbReference type="ChEBI" id="CHEBI:30616"/>
        <dbReference type="ChEBI" id="CHEBI:33019"/>
        <dbReference type="ChEBI" id="CHEBI:57926"/>
        <dbReference type="ChEBI" id="CHEBI:78442"/>
        <dbReference type="ChEBI" id="CHEBI:78534"/>
        <dbReference type="ChEBI" id="CHEBI:456215"/>
        <dbReference type="EC" id="6.1.1.3"/>
    </reaction>
</comment>
<comment type="cofactor">
    <cofactor evidence="1">
        <name>Zn(2+)</name>
        <dbReference type="ChEBI" id="CHEBI:29105"/>
    </cofactor>
    <text evidence="1">Binds 1 zinc ion per subunit.</text>
</comment>
<comment type="subunit">
    <text evidence="1">Homodimer.</text>
</comment>
<comment type="subcellular location">
    <subcellularLocation>
        <location evidence="1">Cytoplasm</location>
    </subcellularLocation>
</comment>
<comment type="similarity">
    <text evidence="1">Belongs to the class-II aminoacyl-tRNA synthetase family.</text>
</comment>
<sequence>MINIRFPDGSIREFEAGVNSLDVAKSISPSLAKATMAAYIDDQLKDAKDAINSNCELRLITVKDPEGLEILRHSCAHLLAHAVKELYPNTEVTIGPVVDNGFYYDFSFKESIGEADLPTIEKKMKELAKKSAPVSYRVVPKAEAIEFFKAQGENYKVEIIDSIADEQMKIYTQDNFSDLCRGPHIPNTSVLKAFKLTKLAGAYWRGNSDNEMLTRIYGTCWATKEDLEQYLNMLEEAEKRDHRKIGKVLDLFHFQEDSPGIAFWHDNGVRIWRQVEDYMRASNNKYGCSEIRTPLIADFSLWQKSGHASKYAENMFATKSENRDFAIRPMNCPTCVQVYNTKLHSYRDLPIRMAEFGIVHRNEPSGSLHGLLRVRSFTQDDGHIFCTPEQVEEEVILMVQQCFEVYKDFGFNDFAVKIALRPENRIGDDETWDKSEQMLKNALDANNVSYELLPGEGAFYGPKIEFHLKDAIGRSWQCGTIQLDFSMPQRLGATYIDKNGEKQVPVMLHRAIVGSLERFIGMLIEHYAGNLPLWLAPVQVAVMGISNNQDDYCKEVFIMLEKNGIRAKLDLRNEKIGFKIREHTLLRVPYLVILGKNEQEQKIITIRKHSGEDLGQMSVDDFCAFLDKQIQAKE</sequence>
<accession>B2SGS3</accession>
<name>SYT_FRATM</name>
<proteinExistence type="inferred from homology"/>
<keyword id="KW-0030">Aminoacyl-tRNA synthetase</keyword>
<keyword id="KW-0067">ATP-binding</keyword>
<keyword id="KW-0963">Cytoplasm</keyword>
<keyword id="KW-0436">Ligase</keyword>
<keyword id="KW-0479">Metal-binding</keyword>
<keyword id="KW-0547">Nucleotide-binding</keyword>
<keyword id="KW-0648">Protein biosynthesis</keyword>
<keyword id="KW-0694">RNA-binding</keyword>
<keyword id="KW-0820">tRNA-binding</keyword>
<keyword id="KW-0862">Zinc</keyword>
<feature type="chain" id="PRO_1000098574" description="Threonine--tRNA ligase">
    <location>
        <begin position="1"/>
        <end position="634"/>
    </location>
</feature>
<feature type="domain" description="TGS" evidence="2">
    <location>
        <begin position="1"/>
        <end position="61"/>
    </location>
</feature>
<feature type="region of interest" description="Catalytic" evidence="1">
    <location>
        <begin position="241"/>
        <end position="532"/>
    </location>
</feature>
<feature type="binding site" evidence="1">
    <location>
        <position position="332"/>
    </location>
    <ligand>
        <name>Zn(2+)</name>
        <dbReference type="ChEBI" id="CHEBI:29105"/>
    </ligand>
</feature>
<feature type="binding site" evidence="1">
    <location>
        <position position="383"/>
    </location>
    <ligand>
        <name>Zn(2+)</name>
        <dbReference type="ChEBI" id="CHEBI:29105"/>
    </ligand>
</feature>
<feature type="binding site" evidence="1">
    <location>
        <position position="509"/>
    </location>
    <ligand>
        <name>Zn(2+)</name>
        <dbReference type="ChEBI" id="CHEBI:29105"/>
    </ligand>
</feature>
<evidence type="ECO:0000255" key="1">
    <source>
        <dbReference type="HAMAP-Rule" id="MF_00184"/>
    </source>
</evidence>
<evidence type="ECO:0000255" key="2">
    <source>
        <dbReference type="PROSITE-ProRule" id="PRU01228"/>
    </source>
</evidence>
<organism>
    <name type="scientific">Francisella tularensis subsp. mediasiatica (strain FSC147)</name>
    <dbReference type="NCBI Taxonomy" id="441952"/>
    <lineage>
        <taxon>Bacteria</taxon>
        <taxon>Pseudomonadati</taxon>
        <taxon>Pseudomonadota</taxon>
        <taxon>Gammaproteobacteria</taxon>
        <taxon>Thiotrichales</taxon>
        <taxon>Francisellaceae</taxon>
        <taxon>Francisella</taxon>
    </lineage>
</organism>
<gene>
    <name evidence="1" type="primary">thrS</name>
    <name type="ordered locus">FTM_1018</name>
</gene>
<protein>
    <recommendedName>
        <fullName evidence="1">Threonine--tRNA ligase</fullName>
        <ecNumber evidence="1">6.1.1.3</ecNumber>
    </recommendedName>
    <alternativeName>
        <fullName evidence="1">Threonyl-tRNA synthetase</fullName>
        <shortName evidence="1">ThrRS</shortName>
    </alternativeName>
</protein>
<dbReference type="EC" id="6.1.1.3" evidence="1"/>
<dbReference type="EMBL" id="CP000915">
    <property type="protein sequence ID" value="ACD30933.1"/>
    <property type="molecule type" value="Genomic_DNA"/>
</dbReference>
<dbReference type="SMR" id="B2SGS3"/>
<dbReference type="KEGG" id="ftm:FTM_1018"/>
<dbReference type="HOGENOM" id="CLU_008554_0_1_6"/>
<dbReference type="GO" id="GO:0005737">
    <property type="term" value="C:cytoplasm"/>
    <property type="evidence" value="ECO:0007669"/>
    <property type="project" value="UniProtKB-SubCell"/>
</dbReference>
<dbReference type="GO" id="GO:0005524">
    <property type="term" value="F:ATP binding"/>
    <property type="evidence" value="ECO:0007669"/>
    <property type="project" value="UniProtKB-UniRule"/>
</dbReference>
<dbReference type="GO" id="GO:0046872">
    <property type="term" value="F:metal ion binding"/>
    <property type="evidence" value="ECO:0007669"/>
    <property type="project" value="UniProtKB-KW"/>
</dbReference>
<dbReference type="GO" id="GO:0004829">
    <property type="term" value="F:threonine-tRNA ligase activity"/>
    <property type="evidence" value="ECO:0007669"/>
    <property type="project" value="UniProtKB-UniRule"/>
</dbReference>
<dbReference type="GO" id="GO:0000049">
    <property type="term" value="F:tRNA binding"/>
    <property type="evidence" value="ECO:0007669"/>
    <property type="project" value="UniProtKB-KW"/>
</dbReference>
<dbReference type="GO" id="GO:0006435">
    <property type="term" value="P:threonyl-tRNA aminoacylation"/>
    <property type="evidence" value="ECO:0007669"/>
    <property type="project" value="UniProtKB-UniRule"/>
</dbReference>
<dbReference type="CDD" id="cd01667">
    <property type="entry name" value="TGS_ThrRS"/>
    <property type="match status" value="1"/>
</dbReference>
<dbReference type="CDD" id="cd00860">
    <property type="entry name" value="ThrRS_anticodon"/>
    <property type="match status" value="1"/>
</dbReference>
<dbReference type="CDD" id="cd00771">
    <property type="entry name" value="ThrRS_core"/>
    <property type="match status" value="1"/>
</dbReference>
<dbReference type="FunFam" id="3.10.20.30:FF:000005">
    <property type="entry name" value="Threonine--tRNA ligase"/>
    <property type="match status" value="1"/>
</dbReference>
<dbReference type="FunFam" id="3.30.54.20:FF:000002">
    <property type="entry name" value="Threonine--tRNA ligase"/>
    <property type="match status" value="1"/>
</dbReference>
<dbReference type="FunFam" id="3.30.930.10:FF:000002">
    <property type="entry name" value="Threonine--tRNA ligase"/>
    <property type="match status" value="1"/>
</dbReference>
<dbReference type="FunFam" id="3.40.50.800:FF:000001">
    <property type="entry name" value="Threonine--tRNA ligase"/>
    <property type="match status" value="1"/>
</dbReference>
<dbReference type="FunFam" id="3.30.980.10:FF:000005">
    <property type="entry name" value="Threonyl-tRNA synthetase, mitochondrial"/>
    <property type="match status" value="1"/>
</dbReference>
<dbReference type="Gene3D" id="3.10.20.30">
    <property type="match status" value="1"/>
</dbReference>
<dbReference type="Gene3D" id="3.30.54.20">
    <property type="match status" value="1"/>
</dbReference>
<dbReference type="Gene3D" id="3.40.50.800">
    <property type="entry name" value="Anticodon-binding domain"/>
    <property type="match status" value="1"/>
</dbReference>
<dbReference type="Gene3D" id="3.30.930.10">
    <property type="entry name" value="Bira Bifunctional Protein, Domain 2"/>
    <property type="match status" value="1"/>
</dbReference>
<dbReference type="Gene3D" id="3.30.980.10">
    <property type="entry name" value="Threonyl-trna Synthetase, Chain A, domain 2"/>
    <property type="match status" value="1"/>
</dbReference>
<dbReference type="HAMAP" id="MF_00184">
    <property type="entry name" value="Thr_tRNA_synth"/>
    <property type="match status" value="1"/>
</dbReference>
<dbReference type="InterPro" id="IPR002314">
    <property type="entry name" value="aa-tRNA-synt_IIb"/>
</dbReference>
<dbReference type="InterPro" id="IPR006195">
    <property type="entry name" value="aa-tRNA-synth_II"/>
</dbReference>
<dbReference type="InterPro" id="IPR045864">
    <property type="entry name" value="aa-tRNA-synth_II/BPL/LPL"/>
</dbReference>
<dbReference type="InterPro" id="IPR004154">
    <property type="entry name" value="Anticodon-bd"/>
</dbReference>
<dbReference type="InterPro" id="IPR036621">
    <property type="entry name" value="Anticodon-bd_dom_sf"/>
</dbReference>
<dbReference type="InterPro" id="IPR012675">
    <property type="entry name" value="Beta-grasp_dom_sf"/>
</dbReference>
<dbReference type="InterPro" id="IPR004095">
    <property type="entry name" value="TGS"/>
</dbReference>
<dbReference type="InterPro" id="IPR012676">
    <property type="entry name" value="TGS-like"/>
</dbReference>
<dbReference type="InterPro" id="IPR002320">
    <property type="entry name" value="Thr-tRNA-ligase_IIa"/>
</dbReference>
<dbReference type="InterPro" id="IPR018163">
    <property type="entry name" value="Thr/Ala-tRNA-synth_IIc_edit"/>
</dbReference>
<dbReference type="InterPro" id="IPR047246">
    <property type="entry name" value="ThrRS_anticodon"/>
</dbReference>
<dbReference type="InterPro" id="IPR033728">
    <property type="entry name" value="ThrRS_core"/>
</dbReference>
<dbReference type="InterPro" id="IPR012947">
    <property type="entry name" value="tRNA_SAD"/>
</dbReference>
<dbReference type="NCBIfam" id="TIGR00418">
    <property type="entry name" value="thrS"/>
    <property type="match status" value="1"/>
</dbReference>
<dbReference type="PANTHER" id="PTHR11451:SF44">
    <property type="entry name" value="THREONINE--TRNA LIGASE, CHLOROPLASTIC_MITOCHONDRIAL 2"/>
    <property type="match status" value="1"/>
</dbReference>
<dbReference type="PANTHER" id="PTHR11451">
    <property type="entry name" value="THREONINE-TRNA LIGASE"/>
    <property type="match status" value="1"/>
</dbReference>
<dbReference type="Pfam" id="PF03129">
    <property type="entry name" value="HGTP_anticodon"/>
    <property type="match status" value="1"/>
</dbReference>
<dbReference type="Pfam" id="PF02824">
    <property type="entry name" value="TGS"/>
    <property type="match status" value="1"/>
</dbReference>
<dbReference type="Pfam" id="PF00587">
    <property type="entry name" value="tRNA-synt_2b"/>
    <property type="match status" value="1"/>
</dbReference>
<dbReference type="Pfam" id="PF07973">
    <property type="entry name" value="tRNA_SAD"/>
    <property type="match status" value="1"/>
</dbReference>
<dbReference type="PRINTS" id="PR01047">
    <property type="entry name" value="TRNASYNTHTHR"/>
</dbReference>
<dbReference type="SMART" id="SM00863">
    <property type="entry name" value="tRNA_SAD"/>
    <property type="match status" value="1"/>
</dbReference>
<dbReference type="SUPFAM" id="SSF52954">
    <property type="entry name" value="Class II aaRS ABD-related"/>
    <property type="match status" value="1"/>
</dbReference>
<dbReference type="SUPFAM" id="SSF55681">
    <property type="entry name" value="Class II aaRS and biotin synthetases"/>
    <property type="match status" value="1"/>
</dbReference>
<dbReference type="SUPFAM" id="SSF81271">
    <property type="entry name" value="TGS-like"/>
    <property type="match status" value="1"/>
</dbReference>
<dbReference type="SUPFAM" id="SSF55186">
    <property type="entry name" value="ThrRS/AlaRS common domain"/>
    <property type="match status" value="1"/>
</dbReference>
<dbReference type="PROSITE" id="PS50862">
    <property type="entry name" value="AA_TRNA_LIGASE_II"/>
    <property type="match status" value="1"/>
</dbReference>
<dbReference type="PROSITE" id="PS51880">
    <property type="entry name" value="TGS"/>
    <property type="match status" value="1"/>
</dbReference>
<reference key="1">
    <citation type="journal article" date="2009" name="PLoS Pathog.">
        <title>Molecular evolutionary consequences of niche restriction in Francisella tularensis, a facultative intracellular pathogen.</title>
        <authorList>
            <person name="Larsson P."/>
            <person name="Elfsmark D."/>
            <person name="Svensson K."/>
            <person name="Wikstroem P."/>
            <person name="Forsman M."/>
            <person name="Brettin T."/>
            <person name="Keim P."/>
            <person name="Johansson A."/>
        </authorList>
    </citation>
    <scope>NUCLEOTIDE SEQUENCE [LARGE SCALE GENOMIC DNA]</scope>
    <source>
        <strain>FSC147</strain>
    </source>
</reference>